<dbReference type="EC" id="2.7.7.41" evidence="1"/>
<dbReference type="EMBL" id="CU329671">
    <property type="protein sequence ID" value="CAA20110.3"/>
    <property type="status" value="ALT_FRAME"/>
    <property type="molecule type" value="Genomic_DNA"/>
</dbReference>
<dbReference type="PIR" id="T39854">
    <property type="entry name" value="T39854"/>
</dbReference>
<dbReference type="PDB" id="6IG2">
    <property type="method" value="X-ray"/>
    <property type="resolution" value="2.88 A"/>
    <property type="chains" value="A/B/C/D=28-319"/>
</dbReference>
<dbReference type="PDB" id="6IG4">
    <property type="method" value="X-ray"/>
    <property type="resolution" value="2.26 A"/>
    <property type="chains" value="A/B=28-319"/>
</dbReference>
<dbReference type="PDBsum" id="6IG2"/>
<dbReference type="PDBsum" id="6IG4"/>
<dbReference type="SMR" id="O74339"/>
<dbReference type="FunCoup" id="O74339">
    <property type="interactions" value="531"/>
</dbReference>
<dbReference type="STRING" id="284812.O74339"/>
<dbReference type="PaxDb" id="4896-SPBC1A4.06c.1"/>
<dbReference type="PomBase" id="SPBC1A4.06c">
    <property type="gene designation" value="tam41"/>
</dbReference>
<dbReference type="eggNOG" id="KOG2986">
    <property type="taxonomic scope" value="Eukaryota"/>
</dbReference>
<dbReference type="HOGENOM" id="CLU_030279_1_1_1"/>
<dbReference type="InParanoid" id="O74339"/>
<dbReference type="BRENDA" id="2.7.7.41">
    <property type="organism ID" value="5613"/>
</dbReference>
<dbReference type="UniPathway" id="UPA00557">
    <property type="reaction ID" value="UER00614"/>
</dbReference>
<dbReference type="PRO" id="PR:O74339"/>
<dbReference type="Proteomes" id="UP000002485">
    <property type="component" value="Chromosome II"/>
</dbReference>
<dbReference type="GO" id="GO:0031314">
    <property type="term" value="C:extrinsic component of mitochondrial inner membrane"/>
    <property type="evidence" value="ECO:0000266"/>
    <property type="project" value="PomBase"/>
</dbReference>
<dbReference type="GO" id="GO:0005759">
    <property type="term" value="C:mitochondrial matrix"/>
    <property type="evidence" value="ECO:0000266"/>
    <property type="project" value="PomBase"/>
</dbReference>
<dbReference type="GO" id="GO:0005739">
    <property type="term" value="C:mitochondrion"/>
    <property type="evidence" value="ECO:0000318"/>
    <property type="project" value="GO_Central"/>
</dbReference>
<dbReference type="GO" id="GO:1901612">
    <property type="term" value="F:cardiolipin binding"/>
    <property type="evidence" value="ECO:0000314"/>
    <property type="project" value="PomBase"/>
</dbReference>
<dbReference type="GO" id="GO:0004605">
    <property type="term" value="F:phosphatidate cytidylyltransferase activity"/>
    <property type="evidence" value="ECO:0000314"/>
    <property type="project" value="PomBase"/>
</dbReference>
<dbReference type="GO" id="GO:0070300">
    <property type="term" value="F:phosphatidic acid binding"/>
    <property type="evidence" value="ECO:0000314"/>
    <property type="project" value="PomBase"/>
</dbReference>
<dbReference type="GO" id="GO:0032049">
    <property type="term" value="P:cardiolipin biosynthetic process"/>
    <property type="evidence" value="ECO:0000250"/>
    <property type="project" value="UniProtKB"/>
</dbReference>
<dbReference type="GO" id="GO:0016024">
    <property type="term" value="P:CDP-diacylglycerol biosynthetic process"/>
    <property type="evidence" value="ECO:0000314"/>
    <property type="project" value="PomBase"/>
</dbReference>
<dbReference type="GO" id="GO:0007006">
    <property type="term" value="P:mitochondrial membrane organization"/>
    <property type="evidence" value="ECO:0000305"/>
    <property type="project" value="PomBase"/>
</dbReference>
<dbReference type="InterPro" id="IPR015222">
    <property type="entry name" value="Tam41"/>
</dbReference>
<dbReference type="PANTHER" id="PTHR13619">
    <property type="entry name" value="PHOSPHATIDATE CYTIDYLYLTRANSFERASE, MITOCHONDRIAL"/>
    <property type="match status" value="1"/>
</dbReference>
<dbReference type="PANTHER" id="PTHR13619:SF0">
    <property type="entry name" value="PHOSPHATIDATE CYTIDYLYLTRANSFERASE, MITOCHONDRIAL"/>
    <property type="match status" value="1"/>
</dbReference>
<dbReference type="Pfam" id="PF09139">
    <property type="entry name" value="Tam41_Mmp37"/>
    <property type="match status" value="1"/>
</dbReference>
<dbReference type="PIRSF" id="PIRSF028840">
    <property type="entry name" value="Mmp37"/>
    <property type="match status" value="1"/>
</dbReference>
<reference key="1">
    <citation type="journal article" date="2002" name="Nature">
        <title>The genome sequence of Schizosaccharomyces pombe.</title>
        <authorList>
            <person name="Wood V."/>
            <person name="Gwilliam R."/>
            <person name="Rajandream M.A."/>
            <person name="Lyne M.H."/>
            <person name="Lyne R."/>
            <person name="Stewart A."/>
            <person name="Sgouros J.G."/>
            <person name="Peat N."/>
            <person name="Hayles J."/>
            <person name="Baker S.G."/>
            <person name="Basham D."/>
            <person name="Bowman S."/>
            <person name="Brooks K."/>
            <person name="Brown D."/>
            <person name="Brown S."/>
            <person name="Chillingworth T."/>
            <person name="Churcher C.M."/>
            <person name="Collins M."/>
            <person name="Connor R."/>
            <person name="Cronin A."/>
            <person name="Davis P."/>
            <person name="Feltwell T."/>
            <person name="Fraser A."/>
            <person name="Gentles S."/>
            <person name="Goble A."/>
            <person name="Hamlin N."/>
            <person name="Harris D.E."/>
            <person name="Hidalgo J."/>
            <person name="Hodgson G."/>
            <person name="Holroyd S."/>
            <person name="Hornsby T."/>
            <person name="Howarth S."/>
            <person name="Huckle E.J."/>
            <person name="Hunt S."/>
            <person name="Jagels K."/>
            <person name="James K.D."/>
            <person name="Jones L."/>
            <person name="Jones M."/>
            <person name="Leather S."/>
            <person name="McDonald S."/>
            <person name="McLean J."/>
            <person name="Mooney P."/>
            <person name="Moule S."/>
            <person name="Mungall K.L."/>
            <person name="Murphy L.D."/>
            <person name="Niblett D."/>
            <person name="Odell C."/>
            <person name="Oliver K."/>
            <person name="O'Neil S."/>
            <person name="Pearson D."/>
            <person name="Quail M.A."/>
            <person name="Rabbinowitsch E."/>
            <person name="Rutherford K.M."/>
            <person name="Rutter S."/>
            <person name="Saunders D."/>
            <person name="Seeger K."/>
            <person name="Sharp S."/>
            <person name="Skelton J."/>
            <person name="Simmonds M.N."/>
            <person name="Squares R."/>
            <person name="Squares S."/>
            <person name="Stevens K."/>
            <person name="Taylor K."/>
            <person name="Taylor R.G."/>
            <person name="Tivey A."/>
            <person name="Walsh S.V."/>
            <person name="Warren T."/>
            <person name="Whitehead S."/>
            <person name="Woodward J.R."/>
            <person name="Volckaert G."/>
            <person name="Aert R."/>
            <person name="Robben J."/>
            <person name="Grymonprez B."/>
            <person name="Weltjens I."/>
            <person name="Vanstreels E."/>
            <person name="Rieger M."/>
            <person name="Schaefer M."/>
            <person name="Mueller-Auer S."/>
            <person name="Gabel C."/>
            <person name="Fuchs M."/>
            <person name="Duesterhoeft A."/>
            <person name="Fritzc C."/>
            <person name="Holzer E."/>
            <person name="Moestl D."/>
            <person name="Hilbert H."/>
            <person name="Borzym K."/>
            <person name="Langer I."/>
            <person name="Beck A."/>
            <person name="Lehrach H."/>
            <person name="Reinhardt R."/>
            <person name="Pohl T.M."/>
            <person name="Eger P."/>
            <person name="Zimmermann W."/>
            <person name="Wedler H."/>
            <person name="Wambutt R."/>
            <person name="Purnelle B."/>
            <person name="Goffeau A."/>
            <person name="Cadieu E."/>
            <person name="Dreano S."/>
            <person name="Gloux S."/>
            <person name="Lelaure V."/>
            <person name="Mottier S."/>
            <person name="Galibert F."/>
            <person name="Aves S.J."/>
            <person name="Xiang Z."/>
            <person name="Hunt C."/>
            <person name="Moore K."/>
            <person name="Hurst S.M."/>
            <person name="Lucas M."/>
            <person name="Rochet M."/>
            <person name="Gaillardin C."/>
            <person name="Tallada V.A."/>
            <person name="Garzon A."/>
            <person name="Thode G."/>
            <person name="Daga R.R."/>
            <person name="Cruzado L."/>
            <person name="Jimenez J."/>
            <person name="Sanchez M."/>
            <person name="del Rey F."/>
            <person name="Benito J."/>
            <person name="Dominguez A."/>
            <person name="Revuelta J.L."/>
            <person name="Moreno S."/>
            <person name="Armstrong J."/>
            <person name="Forsburg S.L."/>
            <person name="Cerutti L."/>
            <person name="Lowe T."/>
            <person name="McCombie W.R."/>
            <person name="Paulsen I."/>
            <person name="Potashkin J."/>
            <person name="Shpakovski G.V."/>
            <person name="Ussery D."/>
            <person name="Barrell B.G."/>
            <person name="Nurse P."/>
        </authorList>
    </citation>
    <scope>NUCLEOTIDE SEQUENCE [LARGE SCALE GENOMIC DNA]</scope>
    <source>
        <strain>972 / ATCC 24843</strain>
    </source>
</reference>
<reference key="2">
    <citation type="journal article" date="2011" name="Science">
        <title>Comparative functional genomics of the fission yeasts.</title>
        <authorList>
            <person name="Rhind N."/>
            <person name="Chen Z."/>
            <person name="Yassour M."/>
            <person name="Thompson D.A."/>
            <person name="Haas B.J."/>
            <person name="Habib N."/>
            <person name="Wapinski I."/>
            <person name="Roy S."/>
            <person name="Lin M.F."/>
            <person name="Heiman D.I."/>
            <person name="Young S.K."/>
            <person name="Furuya K."/>
            <person name="Guo Y."/>
            <person name="Pidoux A."/>
            <person name="Chen H.M."/>
            <person name="Robbertse B."/>
            <person name="Goldberg J.M."/>
            <person name="Aoki K."/>
            <person name="Bayne E.H."/>
            <person name="Berlin A.M."/>
            <person name="Desjardins C.A."/>
            <person name="Dobbs E."/>
            <person name="Dukaj L."/>
            <person name="Fan L."/>
            <person name="FitzGerald M.G."/>
            <person name="French C."/>
            <person name="Gujja S."/>
            <person name="Hansen K."/>
            <person name="Keifenheim D."/>
            <person name="Levin J.Z."/>
            <person name="Mosher R.A."/>
            <person name="Mueller C.A."/>
            <person name="Pfiffner J."/>
            <person name="Priest M."/>
            <person name="Russ C."/>
            <person name="Smialowska A."/>
            <person name="Swoboda P."/>
            <person name="Sykes S.M."/>
            <person name="Vaughn M."/>
            <person name="Vengrova S."/>
            <person name="Yoder R."/>
            <person name="Zeng Q."/>
            <person name="Allshire R."/>
            <person name="Baulcombe D."/>
            <person name="Birren B.W."/>
            <person name="Brown W."/>
            <person name="Ekwall K."/>
            <person name="Kellis M."/>
            <person name="Leatherwood J."/>
            <person name="Levin H."/>
            <person name="Margalit H."/>
            <person name="Martienssen R."/>
            <person name="Nieduszynski C.A."/>
            <person name="Spatafora J.W."/>
            <person name="Friedman N."/>
            <person name="Dalgaard J.Z."/>
            <person name="Baumann P."/>
            <person name="Niki H."/>
            <person name="Regev A."/>
            <person name="Nusbaum C."/>
        </authorList>
    </citation>
    <scope>REVISION OF GENE MODEL</scope>
</reference>
<reference key="3">
    <citation type="journal article" date="2006" name="Nat. Biotechnol.">
        <title>ORFeome cloning and global analysis of protein localization in the fission yeast Schizosaccharomyces pombe.</title>
        <authorList>
            <person name="Matsuyama A."/>
            <person name="Arai R."/>
            <person name="Yashiroda Y."/>
            <person name="Shirai A."/>
            <person name="Kamata A."/>
            <person name="Sekido S."/>
            <person name="Kobayashi Y."/>
            <person name="Hashimoto A."/>
            <person name="Hamamoto M."/>
            <person name="Hiraoka Y."/>
            <person name="Horinouchi S."/>
            <person name="Yoshida M."/>
        </authorList>
    </citation>
    <scope>IDENTIFICATION OF FRAMESHIFT</scope>
    <source>
        <strain>972 / ATCC 24843</strain>
        <strain>JY3</strain>
    </source>
</reference>
<reference key="4">
    <citation type="journal article" date="2011" name="Genetics">
        <title>Augmented annotation of the Schizosaccharomyces pombe genome reveals additional genes required for growth and viability.</title>
        <authorList>
            <person name="Bitton D.A."/>
            <person name="Wood V."/>
            <person name="Scutt P.J."/>
            <person name="Grallert A."/>
            <person name="Yates T."/>
            <person name="Smith D.L."/>
            <person name="Hagan I.M."/>
            <person name="Miller C.J."/>
        </authorList>
    </citation>
    <scope>IDENTIFICATION BY MASS SPECTROMETRY</scope>
</reference>
<feature type="chain" id="PRO_0000248361" description="Phosphatidate cytidylyltransferase, mitochondrial">
    <location>
        <begin position="1"/>
        <end position="393"/>
    </location>
</feature>
<feature type="helix" evidence="3">
    <location>
        <begin position="35"/>
        <end position="39"/>
    </location>
</feature>
<feature type="helix" evidence="3">
    <location>
        <begin position="43"/>
        <end position="45"/>
    </location>
</feature>
<feature type="helix" evidence="3">
    <location>
        <begin position="47"/>
        <end position="49"/>
    </location>
</feature>
<feature type="helix" evidence="3">
    <location>
        <begin position="55"/>
        <end position="67"/>
    </location>
</feature>
<feature type="strand" evidence="3">
    <location>
        <begin position="73"/>
        <end position="79"/>
    </location>
</feature>
<feature type="turn" evidence="3">
    <location>
        <begin position="80"/>
        <end position="82"/>
    </location>
</feature>
<feature type="strand" evidence="3">
    <location>
        <begin position="96"/>
        <end position="103"/>
    </location>
</feature>
<feature type="helix" evidence="3">
    <location>
        <begin position="105"/>
        <end position="115"/>
    </location>
</feature>
<feature type="helix" evidence="3">
    <location>
        <begin position="117"/>
        <end position="119"/>
    </location>
</feature>
<feature type="helix" evidence="3">
    <location>
        <begin position="134"/>
        <end position="138"/>
    </location>
</feature>
<feature type="strand" evidence="3">
    <location>
        <begin position="139"/>
        <end position="141"/>
    </location>
</feature>
<feature type="strand" evidence="3">
    <location>
        <begin position="143"/>
        <end position="150"/>
    </location>
</feature>
<feature type="strand" evidence="3">
    <location>
        <begin position="153"/>
        <end position="161"/>
    </location>
</feature>
<feature type="helix" evidence="3">
    <location>
        <begin position="162"/>
        <end position="171"/>
    </location>
</feature>
<feature type="helix" evidence="3">
    <location>
        <begin position="176"/>
        <end position="180"/>
    </location>
</feature>
<feature type="strand" evidence="3">
    <location>
        <begin position="186"/>
        <end position="190"/>
    </location>
</feature>
<feature type="helix" evidence="3">
    <location>
        <begin position="191"/>
        <end position="212"/>
    </location>
</feature>
<feature type="strand" evidence="3">
    <location>
        <begin position="215"/>
        <end position="218"/>
    </location>
</feature>
<feature type="helix" evidence="3">
    <location>
        <begin position="219"/>
        <end position="236"/>
    </location>
</feature>
<feature type="helix" evidence="3">
    <location>
        <begin position="247"/>
        <end position="253"/>
    </location>
</feature>
<feature type="helix" evidence="3">
    <location>
        <begin position="255"/>
        <end position="268"/>
    </location>
</feature>
<feature type="strand" evidence="3">
    <location>
        <begin position="272"/>
        <end position="274"/>
    </location>
</feature>
<feature type="helix" evidence="3">
    <location>
        <begin position="278"/>
        <end position="282"/>
    </location>
</feature>
<feature type="strand" evidence="3">
    <location>
        <begin position="294"/>
        <end position="297"/>
    </location>
</feature>
<feature type="helix" evidence="3">
    <location>
        <begin position="301"/>
        <end position="309"/>
    </location>
</feature>
<feature type="helix" evidence="3">
    <location>
        <begin position="312"/>
        <end position="314"/>
    </location>
</feature>
<comment type="function">
    <text evidence="1">Catalyzes the formation of CDP-diacylglycerol (CDP-DAG) from phosphatidic acid (PA) in the mitochondrial inner membrane. Required for the biosynthesis of the dimeric phospholipid cardiolipin, which stabilizes supercomplexes of the mitochondrial respiratory chain in the mitochondrial inner membrane.</text>
</comment>
<comment type="catalytic activity">
    <reaction>
        <text>a 1,2-diacyl-sn-glycero-3-phosphate + CTP + H(+) = a CDP-1,2-diacyl-sn-glycerol + diphosphate</text>
        <dbReference type="Rhea" id="RHEA:16229"/>
        <dbReference type="ChEBI" id="CHEBI:15378"/>
        <dbReference type="ChEBI" id="CHEBI:33019"/>
        <dbReference type="ChEBI" id="CHEBI:37563"/>
        <dbReference type="ChEBI" id="CHEBI:58332"/>
        <dbReference type="ChEBI" id="CHEBI:58608"/>
        <dbReference type="EC" id="2.7.7.41"/>
    </reaction>
    <physiologicalReaction direction="left-to-right" evidence="1">
        <dbReference type="Rhea" id="RHEA:16230"/>
    </physiologicalReaction>
</comment>
<comment type="cofactor">
    <cofactor evidence="1">
        <name>Mg(2+)</name>
        <dbReference type="ChEBI" id="CHEBI:18420"/>
    </cofactor>
</comment>
<comment type="pathway">
    <text evidence="1">Phospholipid metabolism; CDP-diacylglycerol biosynthesis; CDP-diacylglycerol from sn-glycerol 3-phosphate: step 3/3.</text>
</comment>
<comment type="subcellular location">
    <subcellularLocation>
        <location evidence="1">Mitochondrion inner membrane</location>
        <topology evidence="1">Peripheral membrane protein</topology>
        <orientation evidence="1">Matrix side</orientation>
    </subcellularLocation>
</comment>
<comment type="similarity">
    <text evidence="2">Belongs to the TAM41 family.</text>
</comment>
<comment type="sequence caution" evidence="2">
    <conflict type="frameshift">
        <sequence resource="EMBL-CDS" id="CAA20110"/>
    </conflict>
</comment>
<protein>
    <recommendedName>
        <fullName>Phosphatidate cytidylyltransferase, mitochondrial</fullName>
        <ecNumber evidence="1">2.7.7.41</ecNumber>
    </recommendedName>
    <alternativeName>
        <fullName>CDP-diacylglycerol synthase</fullName>
        <shortName>CDP-DAG synthase</shortName>
    </alternativeName>
    <alternativeName>
        <fullName>Mitochondrial translocator assembly and maintenance protein 41 homolog</fullName>
        <shortName>TAM41</shortName>
    </alternativeName>
</protein>
<gene>
    <name type="primary">tam41</name>
    <name type="ORF">SPBC1A4.06c</name>
</gene>
<keyword id="KW-0002">3D-structure</keyword>
<keyword id="KW-0444">Lipid biosynthesis</keyword>
<keyword id="KW-0443">Lipid metabolism</keyword>
<keyword id="KW-0460">Magnesium</keyword>
<keyword id="KW-0472">Membrane</keyword>
<keyword id="KW-0496">Mitochondrion</keyword>
<keyword id="KW-0999">Mitochondrion inner membrane</keyword>
<keyword id="KW-0548">Nucleotidyltransferase</keyword>
<keyword id="KW-0594">Phospholipid biosynthesis</keyword>
<keyword id="KW-1208">Phospholipid metabolism</keyword>
<keyword id="KW-1185">Reference proteome</keyword>
<keyword id="KW-0808">Transferase</keyword>
<name>TAM41_SCHPO</name>
<evidence type="ECO:0000250" key="1">
    <source>
        <dbReference type="UniProtKB" id="P53230"/>
    </source>
</evidence>
<evidence type="ECO:0000305" key="2"/>
<evidence type="ECO:0007829" key="3">
    <source>
        <dbReference type="PDB" id="6IG4"/>
    </source>
</evidence>
<sequence length="393" mass="45235">MIFGKTHFLSYNILRYSTKRWMNRHSYSHHAKCTVAQLLKQNLLTFENQRIQPEEELKENLTKVVNYFQAPIDVAVGYGSGVFRQAGYSQKENPMIDFIFQVEDPVKWHKINLQQNPSHYSFVKNFGPGFVSTLQESFGTGVYYNTHVEVEGNIIKYGVTSKKDVYEDLKNWNTMYLAGRFQKPVVILKGEDEFYKENSYNLSSALHVGLLMLADRFTEFDLYKTIVSLSYLGDIRMSFFAENPRKVENIVSKQIAFFRKLYLPLLYAEPGVHFIESSEVLKSMDPSDNSRYLSFHQNITKDSISRLLNGLPLNLVKILGLKPDTSSFEKCAELMLTNQISTRSLLISKSIKKLTSFSILTQSIKGIFTAGVIRSFVYVYAKLKKGLLSKWGR</sequence>
<organism>
    <name type="scientific">Schizosaccharomyces pombe (strain 972 / ATCC 24843)</name>
    <name type="common">Fission yeast</name>
    <dbReference type="NCBI Taxonomy" id="284812"/>
    <lineage>
        <taxon>Eukaryota</taxon>
        <taxon>Fungi</taxon>
        <taxon>Dikarya</taxon>
        <taxon>Ascomycota</taxon>
        <taxon>Taphrinomycotina</taxon>
        <taxon>Schizosaccharomycetes</taxon>
        <taxon>Schizosaccharomycetales</taxon>
        <taxon>Schizosaccharomycetaceae</taxon>
        <taxon>Schizosaccharomyces</taxon>
    </lineage>
</organism>
<accession>O74339</accession>
<proteinExistence type="evidence at protein level"/>